<evidence type="ECO:0000269" key="1">
    <source>
    </source>
</evidence>
<evidence type="ECO:0000305" key="2"/>
<gene>
    <name type="primary">crtD</name>
</gene>
<name>CRTD_RUBGE</name>
<feature type="chain" id="PRO_0000423971" description="Hydroxyneurosporene desaturase">
    <location>
        <begin position="1"/>
        <end position="525"/>
    </location>
</feature>
<keyword id="KW-0125">Carotenoid biosynthesis</keyword>
<keyword id="KW-0149">Chlorophyll biosynthesis</keyword>
<keyword id="KW-0560">Oxidoreductase</keyword>
<keyword id="KW-0602">Photosynthesis</keyword>
<dbReference type="EC" id="1.3.99.27"/>
<dbReference type="EMBL" id="AB034704">
    <property type="protein sequence ID" value="BAA94046.1"/>
    <property type="molecule type" value="Genomic_DNA"/>
</dbReference>
<dbReference type="PIR" id="T50893">
    <property type="entry name" value="T50893"/>
</dbReference>
<dbReference type="SMR" id="Q9JPB5"/>
<dbReference type="OMA" id="FTMRWVF"/>
<dbReference type="BRENDA" id="1.3.99.37">
    <property type="organism ID" value="5401"/>
</dbReference>
<dbReference type="UniPathway" id="UPA00683"/>
<dbReference type="GO" id="GO:0016491">
    <property type="term" value="F:oxidoreductase activity"/>
    <property type="evidence" value="ECO:0007669"/>
    <property type="project" value="UniProtKB-KW"/>
</dbReference>
<dbReference type="GO" id="GO:0016117">
    <property type="term" value="P:carotenoid biosynthetic process"/>
    <property type="evidence" value="ECO:0007669"/>
    <property type="project" value="UniProtKB-KW"/>
</dbReference>
<dbReference type="GO" id="GO:0015995">
    <property type="term" value="P:chlorophyll biosynthetic process"/>
    <property type="evidence" value="ECO:0007669"/>
    <property type="project" value="UniProtKB-KW"/>
</dbReference>
<dbReference type="GO" id="GO:0015979">
    <property type="term" value="P:photosynthesis"/>
    <property type="evidence" value="ECO:0007669"/>
    <property type="project" value="UniProtKB-KW"/>
</dbReference>
<dbReference type="Gene3D" id="3.50.50.60">
    <property type="entry name" value="FAD/NAD(P)-binding domain"/>
    <property type="match status" value="2"/>
</dbReference>
<dbReference type="InterPro" id="IPR002937">
    <property type="entry name" value="Amino_oxidase"/>
</dbReference>
<dbReference type="InterPro" id="IPR054841">
    <property type="entry name" value="carotdesatCrtD"/>
</dbReference>
<dbReference type="InterPro" id="IPR014105">
    <property type="entry name" value="Carotenoid/retinoid_OxRdtase"/>
</dbReference>
<dbReference type="InterPro" id="IPR036188">
    <property type="entry name" value="FAD/NAD-bd_sf"/>
</dbReference>
<dbReference type="NCBIfam" id="NF045637">
    <property type="entry name" value="carotdesatCrtDProt"/>
    <property type="match status" value="1"/>
</dbReference>
<dbReference type="NCBIfam" id="TIGR02734">
    <property type="entry name" value="crtI_fam"/>
    <property type="match status" value="1"/>
</dbReference>
<dbReference type="PANTHER" id="PTHR43734:SF7">
    <property type="entry name" value="4,4'-DIAPONEUROSPORENE OXYGENASE"/>
    <property type="match status" value="1"/>
</dbReference>
<dbReference type="PANTHER" id="PTHR43734">
    <property type="entry name" value="PHYTOENE DESATURASE"/>
    <property type="match status" value="1"/>
</dbReference>
<dbReference type="Pfam" id="PF01593">
    <property type="entry name" value="Amino_oxidase"/>
    <property type="match status" value="1"/>
</dbReference>
<dbReference type="SUPFAM" id="SSF51905">
    <property type="entry name" value="FAD/NAD(P)-binding domain"/>
    <property type="match status" value="1"/>
</dbReference>
<sequence length="525" mass="56671">MAEPLRTHRVVVVGAGIAGLTSALLLAARGLDVTLVDKAATPGGKMRQVMVDGAPVDAGPTVFTMRWVFDQIFAAAGATVEEHLKLQPLGVLARHAWRGHEPRLDLFADIRRSAEAIGEFSGPQEAQRFLGFCRQARQLYDHLEGPYIRSERPTLGSMVGDLGPRGLMALMQIGPFSNLWRSLSRHFRDPKLQQLFARYATYCGASPWMAPATLMLVAQVELDGVWAVEGGMHAVAKAFSALAEARGVKTRYGCGCEQILVRDGRAVGVRLAGGEEITADSVVFNGDVNALAQGLLGDPPRRATAAVAPARRSLSALTWLVNARTSGFPLVRHNVFFDEDYASEFDDIFRQRQLPRRGTVYVCAQDRTDEGIGSDAPERLLCLVNAPADGDRRPFDHSETDPCEQRSLALMRECGLTIDWSPQTHRLVTPANFERLFPATGGALYGPATHGWMSSFHRASSTSRLPGLYLAGGSVHPGPGVPMAAMSGRLAAETLMAHLDSTSRSRRVVISGGMSTRSATTGGMA</sequence>
<organism>
    <name type="scientific">Rubrivivax gelatinosus</name>
    <name type="common">Rhodocyclus gelatinosus</name>
    <name type="synonym">Rhodopseudomonas gelatinosa</name>
    <dbReference type="NCBI Taxonomy" id="28068"/>
    <lineage>
        <taxon>Bacteria</taxon>
        <taxon>Pseudomonadati</taxon>
        <taxon>Pseudomonadota</taxon>
        <taxon>Betaproteobacteria</taxon>
        <taxon>Burkholderiales</taxon>
        <taxon>Sphaerotilaceae</taxon>
        <taxon>Rubrivivax</taxon>
    </lineage>
</organism>
<comment type="function">
    <text evidence="1">Catalyzes the introduction of C-3,4 double bonds into 1-hydroxyneurosporene (1-HO-Neu) to yield demethylspheroidene (DMS). The preferred substrates are 1-hydroxy-neurosporene, 1-hydroxy-lycopene and 1,1-dihydroxyneurosporene, however the 3,4-didehydrolycopene derivatives such as 1,1-dihydroxy-3,4-didehydrolycopene, 1-methoxy-1-hydroxy-3,4-didehydrolycopene and 1-hydroxy-3,4-didehydrolycopene are also efficiently converted. 1-HO-carotene derivatives can be also used.</text>
</comment>
<comment type="catalytic activity">
    <reaction evidence="1">
        <text>rhodopin + A = (3E)-3,4-didehydrorhodopin + AH2</text>
        <dbReference type="Rhea" id="RHEA:30919"/>
        <dbReference type="ChEBI" id="CHEBI:13193"/>
        <dbReference type="ChEBI" id="CHEBI:17499"/>
        <dbReference type="ChEBI" id="CHEBI:35331"/>
        <dbReference type="ChEBI" id="CHEBI:62481"/>
        <dbReference type="EC" id="1.3.99.27"/>
    </reaction>
</comment>
<comment type="biophysicochemical properties">
    <kinetics>
        <KM evidence="1">19 uM for 1,1-dihydroxneurosporene (at pH 28 degrees Celsius)</KM>
        <KM evidence="1">25 uM for 1-hydroxyneurosporene (at pH 28 degrees Celsius)</KM>
        <KM evidence="1">40 uM for 1-hydroxylycopene (at pH 28 degrees Celsius)</KM>
        <Vmax evidence="1">1.35 nmol/h/mg enzyme with 1-hydroxyneurosporene as substrate (at pH 28 degrees Celsius)</Vmax>
        <Vmax evidence="1">0.58 nmol/h/mg enzyme with 1,1-dihydroxneurosporene as substrate (at pH 28 degrees Celsius)</Vmax>
        <Vmax evidence="1">0.69 nmol/h/mg enzyme with 1-hydroxylycopene as substrate (at pH 28 degrees Celsius)</Vmax>
    </kinetics>
</comment>
<comment type="pathway">
    <text>Carotenoid biosynthesis; spheroidene biosynthesis.</text>
</comment>
<comment type="similarity">
    <text evidence="2">Belongs to the carotenoid/retinoid oxidoreductase family.</text>
</comment>
<protein>
    <recommendedName>
        <fullName>Hydroxyneurosporene desaturase</fullName>
        <shortName>HND</shortName>
    </recommendedName>
    <alternativeName>
        <fullName>1-hydroxycarotenoid 3,4-dehydrogenase</fullName>
    </alternativeName>
    <alternativeName>
        <fullName>1-hydroxycarotenoid 3,4-desaturase</fullName>
        <ecNumber>1.3.99.27</ecNumber>
    </alternativeName>
</protein>
<reference key="1">
    <citation type="journal article" date="1993" name="Photosyn. Res.">
        <title>Phylogenetic analysis of photosynthetic genes of Rhodocyclus gelatinosus: Possibility of horizontal gene transfer in purple bacteria.</title>
        <authorList>
            <person name="Nagashima K.V."/>
            <person name="Shimada K."/>
            <person name="Matsuura K."/>
        </authorList>
    </citation>
    <scope>NUCLEOTIDE SEQUENCE [GENOMIC DNA]</scope>
    <source>
        <strain>NBRC 100245 / IL144</strain>
    </source>
</reference>
<reference key="2">
    <citation type="journal article" date="1994" name="J. Biol. Chem.">
        <title>Primary structure and transcription of genes encoding B870 and photosynthetic reaction center apoproteins from Rubrivivax gelatinosus.</title>
        <authorList>
            <person name="Nagashima K.V.P."/>
            <person name="Matsuura K."/>
            <person name="Ohyama S."/>
            <person name="Shimada K."/>
        </authorList>
    </citation>
    <scope>NUCLEOTIDE SEQUENCE [GENOMIC DNA]</scope>
    <source>
        <strain>NBRC 100245 / IL144</strain>
    </source>
</reference>
<reference key="3">
    <citation type="journal article" date="1999" name="Biochemistry">
        <title>Dark aerobic growth conditions induce the synthesis of a high midpoint potential cytochrome c8 in the photosynthetic bacterium Rubrivivax gelatinosus.</title>
        <authorList>
            <person name="Menin L."/>
            <person name="Yoshida M."/>
            <person name="Jaquinod M."/>
            <person name="Nagashima K.V."/>
            <person name="Matsuura K."/>
            <person name="Parot P."/>
            <person name="Vermeglio A."/>
        </authorList>
    </citation>
    <scope>NUCLEOTIDE SEQUENCE [GENOMIC DNA]</scope>
    <source>
        <strain>NBRC 100245 / IL144</strain>
    </source>
</reference>
<reference key="4">
    <citation type="journal article" date="1999" name="J. Mol. Evol.">
        <title>Horizontal transfer of the photosynthesis gene cluster and operon rearrangement in purple bacteria.</title>
        <authorList>
            <person name="Igarashi N."/>
            <person name="Harada J."/>
            <person name="Nagashima S."/>
            <person name="Matsuura K."/>
            <person name="Shimada K."/>
            <person name="Nagashima K.V.P."/>
        </authorList>
    </citation>
    <scope>NUCLEOTIDE SEQUENCE [GENOMIC DNA]</scope>
    <source>
        <strain>NBRC 100245 / IL144</strain>
    </source>
</reference>
<reference key="5">
    <citation type="journal article" date="2000" name="Biochem. J.">
        <title>Substrate specificity of the expressed carotenoid 3,4-desaturase from Rubrivivax gelatinosus reveals the detailed reaction sequence to spheroidene and spirilloxanthin.</title>
        <authorList>
            <person name="Steiger S."/>
            <person name="Astier C."/>
            <person name="Sandmann G."/>
        </authorList>
    </citation>
    <scope>FUNCTION</scope>
    <scope>CATALYTIC ACTIVITY</scope>
    <scope>BIOPHYSICOCHEMICAL PROPERTIES</scope>
    <scope>SUBSTRATE SPECIFICITY</scope>
</reference>
<proteinExistence type="evidence at protein level"/>
<accession>Q9JPB5</accession>